<keyword id="KW-0963">Cytoplasm</keyword>
<keyword id="KW-0489">Methyltransferase</keyword>
<keyword id="KW-0698">rRNA processing</keyword>
<keyword id="KW-0949">S-adenosyl-L-methionine</keyword>
<keyword id="KW-0808">Transferase</keyword>
<sequence length="159" mass="18047">MNIKIIGVGKLKEKYFKAGIAEYAKRLGRYCKFEIVEVPDEKAPESLSQAEMDEVMAKEGERILDKIKDREYVYALAIKGKERSSEEFAKEINKLTTYGHSDITFVIGGSLGLSPAVLKRADAQISFGRFTLPHQLMRLVLSEQIYRAFTIINGLPYHK</sequence>
<proteinExistence type="inferred from homology"/>
<gene>
    <name evidence="1" type="primary">rlmH</name>
    <name type="ordered locus">LAR_0026</name>
</gene>
<evidence type="ECO:0000255" key="1">
    <source>
        <dbReference type="HAMAP-Rule" id="MF_00658"/>
    </source>
</evidence>
<name>RLMH_LIMRJ</name>
<reference key="1">
    <citation type="journal article" date="2008" name="DNA Res.">
        <title>Comparative genome analysis of Lactobacillus reuteri and Lactobacillus fermentum reveal a genomic island for reuterin and cobalamin production.</title>
        <authorList>
            <person name="Morita H."/>
            <person name="Toh H."/>
            <person name="Fukuda S."/>
            <person name="Horikawa H."/>
            <person name="Oshima K."/>
            <person name="Suzuki T."/>
            <person name="Murakami M."/>
            <person name="Hisamatsu S."/>
            <person name="Kato Y."/>
            <person name="Takizawa T."/>
            <person name="Fukuoka H."/>
            <person name="Yoshimura T."/>
            <person name="Itoh K."/>
            <person name="O'Sullivan D.J."/>
            <person name="McKay L.L."/>
            <person name="Ohno H."/>
            <person name="Kikuchi J."/>
            <person name="Masaoka T."/>
            <person name="Hattori M."/>
        </authorList>
    </citation>
    <scope>NUCLEOTIDE SEQUENCE [LARGE SCALE GENOMIC DNA]</scope>
    <source>
        <strain>JCM 1112</strain>
    </source>
</reference>
<organism>
    <name type="scientific">Limosilactobacillus reuteri subsp. reuteri (strain JCM 1112)</name>
    <name type="common">Lactobacillus reuteri</name>
    <dbReference type="NCBI Taxonomy" id="557433"/>
    <lineage>
        <taxon>Bacteria</taxon>
        <taxon>Bacillati</taxon>
        <taxon>Bacillota</taxon>
        <taxon>Bacilli</taxon>
        <taxon>Lactobacillales</taxon>
        <taxon>Lactobacillaceae</taxon>
        <taxon>Limosilactobacillus</taxon>
    </lineage>
</organism>
<protein>
    <recommendedName>
        <fullName evidence="1">Ribosomal RNA large subunit methyltransferase H</fullName>
        <ecNumber evidence="1">2.1.1.177</ecNumber>
    </recommendedName>
    <alternativeName>
        <fullName evidence="1">23S rRNA (pseudouridine1915-N3)-methyltransferase</fullName>
    </alternativeName>
    <alternativeName>
        <fullName evidence="1">23S rRNA m3Psi1915 methyltransferase</fullName>
    </alternativeName>
    <alternativeName>
        <fullName evidence="1">rRNA (pseudouridine-N3-)-methyltransferase RlmH</fullName>
    </alternativeName>
</protein>
<dbReference type="EC" id="2.1.1.177" evidence="1"/>
<dbReference type="EMBL" id="AP007281">
    <property type="protein sequence ID" value="BAG24542.1"/>
    <property type="molecule type" value="Genomic_DNA"/>
</dbReference>
<dbReference type="RefSeq" id="WP_011953354.1">
    <property type="nucleotide sequence ID" value="NC_010609.1"/>
</dbReference>
<dbReference type="SMR" id="B2G510"/>
<dbReference type="KEGG" id="lrf:LAR_0026"/>
<dbReference type="HOGENOM" id="CLU_100552_0_0_9"/>
<dbReference type="GO" id="GO:0005737">
    <property type="term" value="C:cytoplasm"/>
    <property type="evidence" value="ECO:0007669"/>
    <property type="project" value="UniProtKB-SubCell"/>
</dbReference>
<dbReference type="GO" id="GO:0070038">
    <property type="term" value="F:rRNA (pseudouridine-N3-)-methyltransferase activity"/>
    <property type="evidence" value="ECO:0007669"/>
    <property type="project" value="UniProtKB-UniRule"/>
</dbReference>
<dbReference type="CDD" id="cd18081">
    <property type="entry name" value="RlmH-like"/>
    <property type="match status" value="1"/>
</dbReference>
<dbReference type="Gene3D" id="3.40.1280.10">
    <property type="match status" value="1"/>
</dbReference>
<dbReference type="HAMAP" id="MF_00658">
    <property type="entry name" value="23SrRNA_methyltr_H"/>
    <property type="match status" value="1"/>
</dbReference>
<dbReference type="InterPro" id="IPR029028">
    <property type="entry name" value="Alpha/beta_knot_MTases"/>
</dbReference>
<dbReference type="InterPro" id="IPR003742">
    <property type="entry name" value="RlmH-like"/>
</dbReference>
<dbReference type="InterPro" id="IPR029026">
    <property type="entry name" value="tRNA_m1G_MTases_N"/>
</dbReference>
<dbReference type="NCBIfam" id="NF000985">
    <property type="entry name" value="PRK00103.1-3"/>
    <property type="match status" value="1"/>
</dbReference>
<dbReference type="NCBIfam" id="TIGR00246">
    <property type="entry name" value="tRNA_RlmH_YbeA"/>
    <property type="match status" value="1"/>
</dbReference>
<dbReference type="PANTHER" id="PTHR33603">
    <property type="entry name" value="METHYLTRANSFERASE"/>
    <property type="match status" value="1"/>
</dbReference>
<dbReference type="PANTHER" id="PTHR33603:SF1">
    <property type="entry name" value="RIBOSOMAL RNA LARGE SUBUNIT METHYLTRANSFERASE H"/>
    <property type="match status" value="1"/>
</dbReference>
<dbReference type="Pfam" id="PF02590">
    <property type="entry name" value="SPOUT_MTase"/>
    <property type="match status" value="1"/>
</dbReference>
<dbReference type="PIRSF" id="PIRSF004505">
    <property type="entry name" value="MT_bac"/>
    <property type="match status" value="1"/>
</dbReference>
<dbReference type="SUPFAM" id="SSF75217">
    <property type="entry name" value="alpha/beta knot"/>
    <property type="match status" value="1"/>
</dbReference>
<accession>B2G510</accession>
<feature type="chain" id="PRO_0000366615" description="Ribosomal RNA large subunit methyltransferase H">
    <location>
        <begin position="1"/>
        <end position="159"/>
    </location>
</feature>
<feature type="binding site" evidence="1">
    <location>
        <position position="76"/>
    </location>
    <ligand>
        <name>S-adenosyl-L-methionine</name>
        <dbReference type="ChEBI" id="CHEBI:59789"/>
    </ligand>
</feature>
<feature type="binding site" evidence="1">
    <location>
        <position position="108"/>
    </location>
    <ligand>
        <name>S-adenosyl-L-methionine</name>
        <dbReference type="ChEBI" id="CHEBI:59789"/>
    </ligand>
</feature>
<comment type="function">
    <text evidence="1">Specifically methylates the pseudouridine at position 1915 (m3Psi1915) in 23S rRNA.</text>
</comment>
<comment type="catalytic activity">
    <reaction evidence="1">
        <text>pseudouridine(1915) in 23S rRNA + S-adenosyl-L-methionine = N(3)-methylpseudouridine(1915) in 23S rRNA + S-adenosyl-L-homocysteine + H(+)</text>
        <dbReference type="Rhea" id="RHEA:42752"/>
        <dbReference type="Rhea" id="RHEA-COMP:10221"/>
        <dbReference type="Rhea" id="RHEA-COMP:10222"/>
        <dbReference type="ChEBI" id="CHEBI:15378"/>
        <dbReference type="ChEBI" id="CHEBI:57856"/>
        <dbReference type="ChEBI" id="CHEBI:59789"/>
        <dbReference type="ChEBI" id="CHEBI:65314"/>
        <dbReference type="ChEBI" id="CHEBI:74486"/>
        <dbReference type="EC" id="2.1.1.177"/>
    </reaction>
</comment>
<comment type="subunit">
    <text evidence="1">Homodimer.</text>
</comment>
<comment type="subcellular location">
    <subcellularLocation>
        <location evidence="1">Cytoplasm</location>
    </subcellularLocation>
</comment>
<comment type="similarity">
    <text evidence="1">Belongs to the RNA methyltransferase RlmH family.</text>
</comment>